<protein>
    <recommendedName>
        <fullName>F-box protein At5g36730</fullName>
    </recommendedName>
</protein>
<feature type="chain" id="PRO_0000283531" description="F-box protein At5g36730">
    <location>
        <begin position="1"/>
        <end position="410"/>
    </location>
</feature>
<feature type="domain" description="F-box" evidence="1">
    <location>
        <begin position="1"/>
        <end position="46"/>
    </location>
</feature>
<keyword id="KW-1185">Reference proteome</keyword>
<name>FB264_ARATH</name>
<sequence>MAMSNLPRDLLEEVLSRVPVKSIAAVRSTCKNWNSLTYGQSFTKKLYGKTMATKEKEFLVVMTMDLEVYLMRVNLHGIHKDDNNVKSSIMQKAKLIRLNDDRVRVDDICKVFHCDGLLLCITIGIRLVVCNPYCGQTRCIKTRRDYHITDNYALGHEKMKNSPLRNYKILVFHDKSFLQNSWFEIYNFNSDSWKVLYFTCDWKLPFSQLVVSLKGNTYWFAREMYIHGPRIDLPDFLICFDFTTERFGPRLHLPFHSRCVDTVTLASVREEQLAVLFQDSKTLILEVWITTKIEPNAVSWSSKVFLEVNMSPLTGFQFNRSFGSFFIVEEKNVVVVPIKGGHFKRNLAYIIGKDEYFKEVDLGVPSSYIYFSPHVCSYVPSLVQIKKDAQVMLQHHNVSAEKHHEFCASL</sequence>
<evidence type="ECO:0000255" key="1">
    <source>
        <dbReference type="PROSITE-ProRule" id="PRU00080"/>
    </source>
</evidence>
<proteinExistence type="predicted"/>
<dbReference type="EMBL" id="AP002029">
    <property type="protein sequence ID" value="BAA97555.1"/>
    <property type="molecule type" value="Genomic_DNA"/>
</dbReference>
<dbReference type="EMBL" id="CP002688">
    <property type="protein sequence ID" value="AED94106.1"/>
    <property type="molecule type" value="Genomic_DNA"/>
</dbReference>
<dbReference type="RefSeq" id="NP_568538.1">
    <property type="nucleotide sequence ID" value="NM_123030.1"/>
</dbReference>
<dbReference type="RefSeq" id="NP_568542.1">
    <property type="nucleotide sequence ID" value="NM_123040.1"/>
</dbReference>
<dbReference type="FunCoup" id="P0DI00">
    <property type="interactions" value="1"/>
</dbReference>
<dbReference type="STRING" id="3702.P0DI00"/>
<dbReference type="PaxDb" id="3702-AT5G36730.1"/>
<dbReference type="EnsemblPlants" id="AT5G36730.1">
    <property type="protein sequence ID" value="AT5G36730.1"/>
    <property type="gene ID" value="AT5G36730"/>
</dbReference>
<dbReference type="EnsemblPlants" id="AT5G36820.1">
    <property type="protein sequence ID" value="AT5G36820.1"/>
    <property type="gene ID" value="AT5G36820"/>
</dbReference>
<dbReference type="GeneID" id="833638"/>
<dbReference type="Gramene" id="AT5G36730.1">
    <property type="protein sequence ID" value="AT5G36730.1"/>
    <property type="gene ID" value="AT5G36730"/>
</dbReference>
<dbReference type="Gramene" id="AT5G36820.1">
    <property type="protein sequence ID" value="AT5G36820.1"/>
    <property type="gene ID" value="AT5G36820"/>
</dbReference>
<dbReference type="KEGG" id="ath:AT5G36730"/>
<dbReference type="KEGG" id="ath:AT5G36820"/>
<dbReference type="Araport" id="AT5G36730"/>
<dbReference type="TAIR" id="AT5G36730"/>
<dbReference type="HOGENOM" id="CLU_034692_0_0_1"/>
<dbReference type="InParanoid" id="P0DI00"/>
<dbReference type="OMA" id="MEIWITY"/>
<dbReference type="PhylomeDB" id="P0DI00"/>
<dbReference type="PRO" id="PR:P0DI00"/>
<dbReference type="Proteomes" id="UP000006548">
    <property type="component" value="Chromosome 5"/>
</dbReference>
<dbReference type="CDD" id="cd22157">
    <property type="entry name" value="F-box_AtFBW1-like"/>
    <property type="match status" value="1"/>
</dbReference>
<dbReference type="Gene3D" id="1.20.1280.50">
    <property type="match status" value="1"/>
</dbReference>
<dbReference type="InterPro" id="IPR006527">
    <property type="entry name" value="F-box-assoc_dom_typ1"/>
</dbReference>
<dbReference type="InterPro" id="IPR017451">
    <property type="entry name" value="F-box-assoc_interact_dom"/>
</dbReference>
<dbReference type="InterPro" id="IPR036047">
    <property type="entry name" value="F-box-like_dom_sf"/>
</dbReference>
<dbReference type="InterPro" id="IPR001810">
    <property type="entry name" value="F-box_dom"/>
</dbReference>
<dbReference type="InterPro" id="IPR050796">
    <property type="entry name" value="SCF_F-box_component"/>
</dbReference>
<dbReference type="NCBIfam" id="TIGR01640">
    <property type="entry name" value="F_box_assoc_1"/>
    <property type="match status" value="1"/>
</dbReference>
<dbReference type="PANTHER" id="PTHR31672">
    <property type="entry name" value="BNACNNG10540D PROTEIN"/>
    <property type="match status" value="1"/>
</dbReference>
<dbReference type="PANTHER" id="PTHR31672:SF13">
    <property type="entry name" value="F-BOX PROTEIN CPR30-LIKE"/>
    <property type="match status" value="1"/>
</dbReference>
<dbReference type="Pfam" id="PF00646">
    <property type="entry name" value="F-box"/>
    <property type="match status" value="1"/>
</dbReference>
<dbReference type="Pfam" id="PF07734">
    <property type="entry name" value="FBA_1"/>
    <property type="match status" value="1"/>
</dbReference>
<dbReference type="SMART" id="SM00256">
    <property type="entry name" value="FBOX"/>
    <property type="match status" value="1"/>
</dbReference>
<dbReference type="SUPFAM" id="SSF81383">
    <property type="entry name" value="F-box domain"/>
    <property type="match status" value="1"/>
</dbReference>
<dbReference type="PROSITE" id="PS50181">
    <property type="entry name" value="FBOX"/>
    <property type="match status" value="1"/>
</dbReference>
<reference key="1">
    <citation type="submission" date="2000-05" db="EMBL/GenBank/DDBJ databases">
        <title>Structural analysis of Arabidopsis thaliana chromosome 5. XI.</title>
        <authorList>
            <person name="Kaneko T."/>
            <person name="Katoh T."/>
            <person name="Asamizu E."/>
            <person name="Sato S."/>
            <person name="Nakamura Y."/>
            <person name="Kotani H."/>
            <person name="Tabata S."/>
        </authorList>
    </citation>
    <scope>NUCLEOTIDE SEQUENCE [LARGE SCALE GENOMIC DNA]</scope>
    <source>
        <strain>cv. Columbia</strain>
    </source>
</reference>
<reference key="2">
    <citation type="journal article" date="2017" name="Plant J.">
        <title>Araport11: a complete reannotation of the Arabidopsis thaliana reference genome.</title>
        <authorList>
            <person name="Cheng C.Y."/>
            <person name="Krishnakumar V."/>
            <person name="Chan A.P."/>
            <person name="Thibaud-Nissen F."/>
            <person name="Schobel S."/>
            <person name="Town C.D."/>
        </authorList>
    </citation>
    <scope>GENOME REANNOTATION</scope>
    <source>
        <strain>cv. Columbia</strain>
    </source>
</reference>
<gene>
    <name type="ordered locus">At5g36730</name>
    <name type="ORF">F24C7.12</name>
</gene>
<accession>P0DI00</accession>
<accession>Q9LDB2</accession>
<organism>
    <name type="scientific">Arabidopsis thaliana</name>
    <name type="common">Mouse-ear cress</name>
    <dbReference type="NCBI Taxonomy" id="3702"/>
    <lineage>
        <taxon>Eukaryota</taxon>
        <taxon>Viridiplantae</taxon>
        <taxon>Streptophyta</taxon>
        <taxon>Embryophyta</taxon>
        <taxon>Tracheophyta</taxon>
        <taxon>Spermatophyta</taxon>
        <taxon>Magnoliopsida</taxon>
        <taxon>eudicotyledons</taxon>
        <taxon>Gunneridae</taxon>
        <taxon>Pentapetalae</taxon>
        <taxon>rosids</taxon>
        <taxon>malvids</taxon>
        <taxon>Brassicales</taxon>
        <taxon>Brassicaceae</taxon>
        <taxon>Camelineae</taxon>
        <taxon>Arabidopsis</taxon>
    </lineage>
</organism>